<organism>
    <name type="scientific">Oldenlandia affinis</name>
    <dbReference type="NCBI Taxonomy" id="60225"/>
    <lineage>
        <taxon>Eukaryota</taxon>
        <taxon>Viridiplantae</taxon>
        <taxon>Streptophyta</taxon>
        <taxon>Embryophyta</taxon>
        <taxon>Tracheophyta</taxon>
        <taxon>Spermatophyta</taxon>
        <taxon>Magnoliopsida</taxon>
        <taxon>eudicotyledons</taxon>
        <taxon>Gunneridae</taxon>
        <taxon>Pentapetalae</taxon>
        <taxon>asterids</taxon>
        <taxon>lamiids</taxon>
        <taxon>Gentianales</taxon>
        <taxon>Rubiaceae</taxon>
        <taxon>Rubioideae</taxon>
        <taxon>Spermacoceae</taxon>
        <taxon>Hedyotis-Oldenlandia complex</taxon>
        <taxon>Oldenlandia</taxon>
    </lineage>
</organism>
<evidence type="ECO:0000255" key="1"/>
<evidence type="ECO:0000255" key="2">
    <source>
        <dbReference type="PROSITE-ProRule" id="PRU00395"/>
    </source>
</evidence>
<evidence type="ECO:0000269" key="3">
    <source>
    </source>
</evidence>
<evidence type="ECO:0000269" key="4">
    <source>
    </source>
</evidence>
<evidence type="ECO:0000305" key="5">
    <source>
    </source>
</evidence>
<evidence type="ECO:0007829" key="6">
    <source>
        <dbReference type="PDB" id="1PT4"/>
    </source>
</evidence>
<keyword id="KW-0002">3D-structure</keyword>
<keyword id="KW-0204">Cytolysis</keyword>
<keyword id="KW-0903">Direct protein sequencing</keyword>
<keyword id="KW-1015">Disulfide bond</keyword>
<keyword id="KW-0354">Hemolysis</keyword>
<keyword id="KW-0960">Knottin</keyword>
<keyword id="KW-0611">Plant defense</keyword>
<keyword id="KW-0677">Repeat</keyword>
<keyword id="KW-0732">Signal</keyword>
<gene>
    <name type="primary">OAK4</name>
</gene>
<protein>
    <recommendedName>
        <fullName>Kalata-B2</fullName>
    </recommendedName>
</protein>
<sequence>MAKFTNCLVLSLLLAAFVGAFGAEFSEADKATLVNDIAENIQKEILGEVKTSETVLTMFLKEMQLKGLPVCGETCFGGTCNTPGCSCTWPICTRDSLPMRAGGKTSETTLHMFLKEMQLKGLPVCGETCFGGTCNTPGCSCTWPICTRDSLPMSAGGKTSETTLHMFLKEMQLKGLPVCGETCFGGTCNTPGCSCTWPICTRDSLPLVAA</sequence>
<name>KAB2_OLDAF</name>
<comment type="function">
    <text evidence="2 3">Probably participates in a plant defense mechanism. Inhibitory effect on the growth and development of larvae from Helicoverpa punctigera. Has hemolytic activity.</text>
</comment>
<comment type="domain">
    <text>The presence of a 'disulfide through disulfide knot' structurally defines this protein as a knottin.</text>
</comment>
<comment type="PTM">
    <text evidence="4">Kalata-B2 is a cyclic peptide which occurs in three forms: with unmodified Trp, with Trp oxidized to form N-formylkynurenine and with Trp oxidized to form kynurenine. Oxidation is enhanced by exposure to sunlight.</text>
</comment>
<comment type="mass spectrometry"/>
<comment type="mass spectrometry">
    <text>With N-formylkynurenine.</text>
</comment>
<comment type="mass spectrometry">
    <text>With kynurenine.</text>
</comment>
<comment type="similarity">
    <text evidence="2">Belongs to the cyclotide family. Moebius subfamily.</text>
</comment>
<comment type="caution">
    <text evidence="5">The oxidation forms of Trp-89, Trp-143 and Trp-197 are subject of controversy and could be the artifactual results of sample handling.</text>
</comment>
<proteinExistence type="evidence at protein level"/>
<dbReference type="EMBL" id="AF393828">
    <property type="protein sequence ID" value="AAL05480.1"/>
    <property type="molecule type" value="mRNA"/>
</dbReference>
<dbReference type="PDB" id="1PT4">
    <property type="method" value="NMR"/>
    <property type="chains" value="A=179-206"/>
</dbReference>
<dbReference type="PDB" id="2KCH">
    <property type="method" value="NMR"/>
    <property type="chains" value="A=179-206"/>
</dbReference>
<dbReference type="PDBsum" id="1PT4"/>
<dbReference type="PDBsum" id="2KCH"/>
<dbReference type="SMR" id="P58454"/>
<dbReference type="EvolutionaryTrace" id="P58454"/>
<dbReference type="GO" id="GO:0006952">
    <property type="term" value="P:defense response"/>
    <property type="evidence" value="ECO:0007669"/>
    <property type="project" value="UniProtKB-KW"/>
</dbReference>
<dbReference type="GO" id="GO:0031640">
    <property type="term" value="P:killing of cells of another organism"/>
    <property type="evidence" value="ECO:0007669"/>
    <property type="project" value="UniProtKB-KW"/>
</dbReference>
<dbReference type="InterPro" id="IPR005535">
    <property type="entry name" value="Cyclotide"/>
</dbReference>
<dbReference type="InterPro" id="IPR012324">
    <property type="entry name" value="Cyclotide_moebius_CS"/>
</dbReference>
<dbReference type="InterPro" id="IPR036146">
    <property type="entry name" value="Cyclotide_sf"/>
</dbReference>
<dbReference type="Pfam" id="PF03784">
    <property type="entry name" value="Cyclotide"/>
    <property type="match status" value="3"/>
</dbReference>
<dbReference type="SUPFAM" id="SSF57038">
    <property type="entry name" value="Cyclotides"/>
    <property type="match status" value="3"/>
</dbReference>
<dbReference type="PROSITE" id="PS51052">
    <property type="entry name" value="CYCLOTIDE"/>
    <property type="match status" value="3"/>
</dbReference>
<dbReference type="PROSITE" id="PS60009">
    <property type="entry name" value="CYCLOTIDE_MOEBIUS"/>
    <property type="match status" value="3"/>
</dbReference>
<accession>P58454</accession>
<feature type="signal peptide" evidence="1">
    <location>
        <begin position="1"/>
        <end position="22"/>
    </location>
</feature>
<feature type="propeptide" id="PRO_0000006620">
    <location>
        <begin position="23"/>
        <end position="66"/>
    </location>
</feature>
<feature type="peptide" id="PRO_0000006621" description="Kalata-B2">
    <location>
        <begin position="67"/>
        <end position="95"/>
    </location>
</feature>
<feature type="propeptide" id="PRO_0000006622">
    <location>
        <begin position="96"/>
        <end position="120"/>
    </location>
</feature>
<feature type="peptide" id="PRO_0000006623" description="Kalata-B2">
    <location>
        <begin position="121"/>
        <end position="149"/>
    </location>
</feature>
<feature type="propeptide" id="PRO_0000006624">
    <location>
        <begin position="150"/>
        <end position="174"/>
    </location>
</feature>
<feature type="peptide" id="PRO_0000006625" description="Kalata-B2">
    <location>
        <begin position="175"/>
        <end position="203"/>
    </location>
</feature>
<feature type="propeptide" id="PRO_0000006626">
    <location>
        <begin position="204"/>
        <end position="210"/>
    </location>
</feature>
<feature type="disulfide bond">
    <location>
        <begin position="71"/>
        <end position="85"/>
    </location>
</feature>
<feature type="disulfide bond">
    <location>
        <begin position="75"/>
        <end position="87"/>
    </location>
</feature>
<feature type="disulfide bond">
    <location>
        <begin position="80"/>
        <end position="92"/>
    </location>
</feature>
<feature type="disulfide bond">
    <location>
        <begin position="125"/>
        <end position="139"/>
    </location>
</feature>
<feature type="disulfide bond">
    <location>
        <begin position="129"/>
        <end position="141"/>
    </location>
</feature>
<feature type="disulfide bond">
    <location>
        <begin position="134"/>
        <end position="146"/>
    </location>
</feature>
<feature type="disulfide bond">
    <location>
        <begin position="179"/>
        <end position="193"/>
    </location>
</feature>
<feature type="disulfide bond">
    <location>
        <begin position="183"/>
        <end position="195"/>
    </location>
</feature>
<feature type="disulfide bond">
    <location>
        <begin position="188"/>
        <end position="200"/>
    </location>
</feature>
<feature type="cross-link" description="Cyclopeptide (Gly-Asp)">
    <location>
        <begin position="67"/>
        <end position="95"/>
    </location>
</feature>
<feature type="cross-link" description="Cyclopeptide (Gly-Asp)">
    <location>
        <begin position="121"/>
        <end position="149"/>
    </location>
</feature>
<feature type="cross-link" description="Cyclopeptide (Gly-Asp)">
    <location>
        <begin position="175"/>
        <end position="203"/>
    </location>
</feature>
<feature type="strand" evidence="6">
    <location>
        <begin position="194"/>
        <end position="196"/>
    </location>
</feature>
<feature type="strand" evidence="6">
    <location>
        <begin position="199"/>
        <end position="202"/>
    </location>
</feature>
<reference key="1">
    <citation type="journal article" date="2001" name="Proc. Natl. Acad. Sci. U.S.A.">
        <title>Biosynthesis and insecticidal properties of plant cyclotides: the cyclic knotted proteins from Oldenlandia affinis.</title>
        <authorList>
            <person name="Jennings C.V."/>
            <person name="West J."/>
            <person name="Waine C."/>
            <person name="Craik D.J."/>
            <person name="Anderson M.A."/>
        </authorList>
    </citation>
    <scope>NUCLEOTIDE SEQUENCE [MRNA]</scope>
</reference>
<reference key="2">
    <citation type="journal article" date="1999" name="J. Mol. Biol.">
        <title>Plant cyclotides: a unique family of cyclic and knotted proteins that defines the cyclic cystine knot structural motif.</title>
        <authorList>
            <person name="Craik D.J."/>
            <person name="Daly N.L."/>
            <person name="Bond T."/>
            <person name="Waine C."/>
        </authorList>
    </citation>
    <scope>PROTEIN SEQUENCE OF 67-95; 121-149 AND 175-203</scope>
</reference>
<reference key="3">
    <citation type="journal article" date="2005" name="Biochemistry">
        <title>Isolation, solution structure, and insecticidal activity of kalata B2, a circular protein with a twist: do Mobius strips exist in nature?</title>
        <authorList>
            <person name="Jennings C.V."/>
            <person name="Rosengren K.J."/>
            <person name="Daly N.L."/>
            <person name="Plan M.R.R."/>
            <person name="Stevens J."/>
            <person name="Scanlon M.J."/>
            <person name="Waine C."/>
            <person name="Norman D.G."/>
            <person name="Anderson M.A."/>
            <person name="Craik D.J."/>
        </authorList>
    </citation>
    <scope>PROTEIN SEQUENCE OF 67-95; 121-149 AND 175-203</scope>
    <scope>STRUCTURE BY NMR OF 67-95; 121-149 AND 175-203</scope>
    <scope>FUNCTION</scope>
</reference>
<reference key="4">
    <citation type="journal article" date="2007" name="ChemBioChem">
        <title>The cyclotide fingerprint in Oldenlandia affinis: elucidation of chemically modified, linear and novel macrocyclic peptides.</title>
        <authorList>
            <person name="Plan M.R.R."/>
            <person name="Goeransson U."/>
            <person name="Clark R.J."/>
            <person name="Daly N.L."/>
            <person name="Colgrave M.L."/>
            <person name="Craik D.J."/>
        </authorList>
    </citation>
    <scope>PROTEIN SEQUENCE OF 67-95; 121-149 AND 175-203</scope>
    <scope>MASS SPECTROMETRY</scope>
    <scope>MODIFICATION AT TRP-89; TRP-143 AND TRP-197</scope>
</reference>